<proteinExistence type="inferred from homology"/>
<organism>
    <name type="scientific">Lactococcus lactis subsp. lactis (strain IL1403)</name>
    <name type="common">Streptococcus lactis</name>
    <dbReference type="NCBI Taxonomy" id="272623"/>
    <lineage>
        <taxon>Bacteria</taxon>
        <taxon>Bacillati</taxon>
        <taxon>Bacillota</taxon>
        <taxon>Bacilli</taxon>
        <taxon>Lactobacillales</taxon>
        <taxon>Streptococcaceae</taxon>
        <taxon>Lactococcus</taxon>
    </lineage>
</organism>
<keyword id="KW-0067">ATP-binding</keyword>
<keyword id="KW-0963">Cytoplasm</keyword>
<keyword id="KW-0227">DNA damage</keyword>
<keyword id="KW-0233">DNA recombination</keyword>
<keyword id="KW-0234">DNA repair</keyword>
<keyword id="KW-0238">DNA-binding</keyword>
<keyword id="KW-0547">Nucleotide-binding</keyword>
<keyword id="KW-1185">Reference proteome</keyword>
<keyword id="KW-0742">SOS response</keyword>
<accession>P0C2U4</accession>
<accession>Q01840</accession>
<accession>Q9CIK3</accession>
<dbReference type="EMBL" id="AE005176">
    <property type="protein sequence ID" value="AAK04452.1"/>
    <property type="molecule type" value="Genomic_DNA"/>
</dbReference>
<dbReference type="PIR" id="B86669">
    <property type="entry name" value="B86669"/>
</dbReference>
<dbReference type="RefSeq" id="NP_266510.1">
    <property type="nucleotide sequence ID" value="NC_002662.1"/>
</dbReference>
<dbReference type="RefSeq" id="WP_003131629.1">
    <property type="nucleotide sequence ID" value="NC_002662.1"/>
</dbReference>
<dbReference type="SMR" id="P0C2U4"/>
<dbReference type="PaxDb" id="272623-L0260"/>
<dbReference type="EnsemblBacteria" id="AAK04452">
    <property type="protein sequence ID" value="AAK04452"/>
    <property type="gene ID" value="L0260"/>
</dbReference>
<dbReference type="KEGG" id="lla:L0260"/>
<dbReference type="PATRIC" id="fig|272623.7.peg.388"/>
<dbReference type="eggNOG" id="COG0468">
    <property type="taxonomic scope" value="Bacteria"/>
</dbReference>
<dbReference type="HOGENOM" id="CLU_040469_3_2_9"/>
<dbReference type="OrthoDB" id="9776733at2"/>
<dbReference type="Proteomes" id="UP000002196">
    <property type="component" value="Chromosome"/>
</dbReference>
<dbReference type="GO" id="GO:0005829">
    <property type="term" value="C:cytosol"/>
    <property type="evidence" value="ECO:0007669"/>
    <property type="project" value="TreeGrafter"/>
</dbReference>
<dbReference type="GO" id="GO:0005524">
    <property type="term" value="F:ATP binding"/>
    <property type="evidence" value="ECO:0007669"/>
    <property type="project" value="UniProtKB-UniRule"/>
</dbReference>
<dbReference type="GO" id="GO:0016887">
    <property type="term" value="F:ATP hydrolysis activity"/>
    <property type="evidence" value="ECO:0007669"/>
    <property type="project" value="InterPro"/>
</dbReference>
<dbReference type="GO" id="GO:0140664">
    <property type="term" value="F:ATP-dependent DNA damage sensor activity"/>
    <property type="evidence" value="ECO:0007669"/>
    <property type="project" value="InterPro"/>
</dbReference>
<dbReference type="GO" id="GO:0003684">
    <property type="term" value="F:damaged DNA binding"/>
    <property type="evidence" value="ECO:0007669"/>
    <property type="project" value="UniProtKB-UniRule"/>
</dbReference>
<dbReference type="GO" id="GO:0003697">
    <property type="term" value="F:single-stranded DNA binding"/>
    <property type="evidence" value="ECO:0007669"/>
    <property type="project" value="UniProtKB-UniRule"/>
</dbReference>
<dbReference type="GO" id="GO:0006310">
    <property type="term" value="P:DNA recombination"/>
    <property type="evidence" value="ECO:0007669"/>
    <property type="project" value="UniProtKB-UniRule"/>
</dbReference>
<dbReference type="GO" id="GO:0006281">
    <property type="term" value="P:DNA repair"/>
    <property type="evidence" value="ECO:0007669"/>
    <property type="project" value="UniProtKB-UniRule"/>
</dbReference>
<dbReference type="GO" id="GO:0009432">
    <property type="term" value="P:SOS response"/>
    <property type="evidence" value="ECO:0007669"/>
    <property type="project" value="UniProtKB-UniRule"/>
</dbReference>
<dbReference type="CDD" id="cd00983">
    <property type="entry name" value="RecA"/>
    <property type="match status" value="1"/>
</dbReference>
<dbReference type="FunFam" id="3.40.50.300:FF:000087">
    <property type="entry name" value="Recombinase RecA"/>
    <property type="match status" value="1"/>
</dbReference>
<dbReference type="Gene3D" id="3.40.50.300">
    <property type="entry name" value="P-loop containing nucleotide triphosphate hydrolases"/>
    <property type="match status" value="1"/>
</dbReference>
<dbReference type="HAMAP" id="MF_00268">
    <property type="entry name" value="RecA"/>
    <property type="match status" value="1"/>
</dbReference>
<dbReference type="InterPro" id="IPR003593">
    <property type="entry name" value="AAA+_ATPase"/>
</dbReference>
<dbReference type="InterPro" id="IPR013765">
    <property type="entry name" value="DNA_recomb/repair_RecA"/>
</dbReference>
<dbReference type="InterPro" id="IPR020584">
    <property type="entry name" value="DNA_recomb/repair_RecA_CS"/>
</dbReference>
<dbReference type="InterPro" id="IPR027417">
    <property type="entry name" value="P-loop_NTPase"/>
</dbReference>
<dbReference type="InterPro" id="IPR049261">
    <property type="entry name" value="RecA-like_C"/>
</dbReference>
<dbReference type="InterPro" id="IPR049428">
    <property type="entry name" value="RecA-like_N"/>
</dbReference>
<dbReference type="InterPro" id="IPR020588">
    <property type="entry name" value="RecA_ATP-bd"/>
</dbReference>
<dbReference type="InterPro" id="IPR023400">
    <property type="entry name" value="RecA_C_sf"/>
</dbReference>
<dbReference type="InterPro" id="IPR020587">
    <property type="entry name" value="RecA_monomer-monomer_interface"/>
</dbReference>
<dbReference type="NCBIfam" id="TIGR02012">
    <property type="entry name" value="tigrfam_recA"/>
    <property type="match status" value="1"/>
</dbReference>
<dbReference type="PANTHER" id="PTHR45900:SF1">
    <property type="entry name" value="MITOCHONDRIAL DNA REPAIR PROTEIN RECA HOMOLOG-RELATED"/>
    <property type="match status" value="1"/>
</dbReference>
<dbReference type="PANTHER" id="PTHR45900">
    <property type="entry name" value="RECA"/>
    <property type="match status" value="1"/>
</dbReference>
<dbReference type="Pfam" id="PF00154">
    <property type="entry name" value="RecA"/>
    <property type="match status" value="1"/>
</dbReference>
<dbReference type="Pfam" id="PF21096">
    <property type="entry name" value="RecA_C"/>
    <property type="match status" value="1"/>
</dbReference>
<dbReference type="PRINTS" id="PR00142">
    <property type="entry name" value="RECA"/>
</dbReference>
<dbReference type="SMART" id="SM00382">
    <property type="entry name" value="AAA"/>
    <property type="match status" value="1"/>
</dbReference>
<dbReference type="SUPFAM" id="SSF52540">
    <property type="entry name" value="P-loop containing nucleoside triphosphate hydrolases"/>
    <property type="match status" value="1"/>
</dbReference>
<dbReference type="SUPFAM" id="SSF54752">
    <property type="entry name" value="RecA protein, C-terminal domain"/>
    <property type="match status" value="1"/>
</dbReference>
<dbReference type="PROSITE" id="PS00321">
    <property type="entry name" value="RECA_1"/>
    <property type="match status" value="1"/>
</dbReference>
<dbReference type="PROSITE" id="PS50162">
    <property type="entry name" value="RECA_2"/>
    <property type="match status" value="1"/>
</dbReference>
<dbReference type="PROSITE" id="PS50163">
    <property type="entry name" value="RECA_3"/>
    <property type="match status" value="1"/>
</dbReference>
<reference key="1">
    <citation type="journal article" date="2001" name="Genome Res.">
        <title>The complete genome sequence of the lactic acid bacterium Lactococcus lactis ssp. lactis IL1403.</title>
        <authorList>
            <person name="Bolotin A."/>
            <person name="Wincker P."/>
            <person name="Mauger S."/>
            <person name="Jaillon O."/>
            <person name="Malarme K."/>
            <person name="Weissenbach J."/>
            <person name="Ehrlich S.D."/>
            <person name="Sorokin A."/>
        </authorList>
    </citation>
    <scope>NUCLEOTIDE SEQUENCE [LARGE SCALE GENOMIC DNA]</scope>
    <source>
        <strain>IL1403</strain>
    </source>
</reference>
<protein>
    <recommendedName>
        <fullName evidence="1">Protein RecA, chromosomal</fullName>
    </recommendedName>
    <alternativeName>
        <fullName evidence="1">Recombinase A</fullName>
    </alternativeName>
</protein>
<gene>
    <name evidence="1" type="primary">recA</name>
    <name type="ordered locus">LL0354</name>
    <name type="ORF">L0260</name>
</gene>
<evidence type="ECO:0000255" key="1">
    <source>
        <dbReference type="HAMAP-Rule" id="MF_00268"/>
    </source>
</evidence>
<evidence type="ECO:0000256" key="2">
    <source>
        <dbReference type="SAM" id="MobiDB-lite"/>
    </source>
</evidence>
<comment type="function">
    <text evidence="1">Can catalyze the hydrolysis of ATP in the presence of single-stranded DNA, the ATP-dependent uptake of single-stranded DNA by duplex DNA, and the ATP-dependent hybridization of homologous single-stranded DNAs. It interacts with LexA causing its activation and leading to its autocatalytic cleavage.</text>
</comment>
<comment type="subcellular location">
    <subcellularLocation>
        <location evidence="1">Cytoplasm</location>
    </subcellularLocation>
</comment>
<comment type="similarity">
    <text evidence="1">Belongs to the RecA family.</text>
</comment>
<feature type="chain" id="PRO_0000122733" description="Protein RecA, chromosomal">
    <location>
        <begin position="1"/>
        <end position="387"/>
    </location>
</feature>
<feature type="region of interest" description="Disordered" evidence="2">
    <location>
        <begin position="352"/>
        <end position="387"/>
    </location>
</feature>
<feature type="compositionally biased region" description="Acidic residues" evidence="2">
    <location>
        <begin position="378"/>
        <end position="387"/>
    </location>
</feature>
<feature type="binding site" evidence="1">
    <location>
        <begin position="80"/>
        <end position="87"/>
    </location>
    <ligand>
        <name>ATP</name>
        <dbReference type="ChEBI" id="CHEBI:30616"/>
    </ligand>
</feature>
<name>RECA_LACLA</name>
<sequence length="387" mass="41477">MATKKKTNFDDITKKYGAERDKALADALALIEKDFGKGSLMRLGEAANQKVSVVSSGSLALDIALGAGGYPKGRIVEIYGPESSGKTTVALHAVAAVQKEGGIAAFIDAENALDPEYAKALGVNIDELLLSQPDYGEQGLQIAEKLITSGAVDLVVIDSVAALVPKAEIDGEIGDSSVGLQARMMSQAMRKLAGHINKTKTTAIFINQLREKVGVMFGSPETTPGGRALKFYASVRLDVRGSTKIEEGSGDNKTQIGKITKIKVVKNKVAPPFKVALVDIMFGEGISRTGELLNIAVDEGIIKKSGAWFAYNDEKIGQGAEKAKNYLKEHQEIFDEIDHKVRTAHGLLDEAEVAETTEDTSTKAKATKAKKEEKVVETEEIELELED</sequence>